<organism>
    <name type="scientific">Psychrobacter arcticus (strain DSM 17307 / VKM B-2377 / 273-4)</name>
    <dbReference type="NCBI Taxonomy" id="259536"/>
    <lineage>
        <taxon>Bacteria</taxon>
        <taxon>Pseudomonadati</taxon>
        <taxon>Pseudomonadota</taxon>
        <taxon>Gammaproteobacteria</taxon>
        <taxon>Moraxellales</taxon>
        <taxon>Moraxellaceae</taxon>
        <taxon>Psychrobacter</taxon>
    </lineage>
</organism>
<gene>
    <name evidence="1" type="primary">murA</name>
    <name type="ordered locus">Psyc_1904</name>
</gene>
<comment type="function">
    <text evidence="1">Cell wall formation. Adds enolpyruvyl to UDP-N-acetylglucosamine.</text>
</comment>
<comment type="catalytic activity">
    <reaction evidence="1">
        <text>phosphoenolpyruvate + UDP-N-acetyl-alpha-D-glucosamine = UDP-N-acetyl-3-O-(1-carboxyvinyl)-alpha-D-glucosamine + phosphate</text>
        <dbReference type="Rhea" id="RHEA:18681"/>
        <dbReference type="ChEBI" id="CHEBI:43474"/>
        <dbReference type="ChEBI" id="CHEBI:57705"/>
        <dbReference type="ChEBI" id="CHEBI:58702"/>
        <dbReference type="ChEBI" id="CHEBI:68483"/>
        <dbReference type="EC" id="2.5.1.7"/>
    </reaction>
</comment>
<comment type="pathway">
    <text evidence="1">Cell wall biogenesis; peptidoglycan biosynthesis.</text>
</comment>
<comment type="subcellular location">
    <subcellularLocation>
        <location evidence="1">Cytoplasm</location>
    </subcellularLocation>
</comment>
<comment type="similarity">
    <text evidence="1">Belongs to the EPSP synthase family. MurA subfamily.</text>
</comment>
<evidence type="ECO:0000255" key="1">
    <source>
        <dbReference type="HAMAP-Rule" id="MF_00111"/>
    </source>
</evidence>
<accession>Q4FQF6</accession>
<sequence length="422" mass="44723">MDQFLITGSSRIAGEVTISGAKNAALPLLAAMILAETPTTLHNVPSLQDVRTLIELIGGMGIKIQKQGDTVTCDTKSIDNFYAPYDLVKTMRASILVLGPLLARFGEAEVSLPGGCAIGSRPVDQHLKAFEAMGASITVENGYVIAQAPKGGKLLGCKFSFDMVTVGGTENVIMAAALAKGTTVLGNCALEPEVVDLANMLVAMGAKISGIGTAIMTIEGVERLHGCEYAVVPDRIETGSYLAGALMTGGDVLTKNTSALLLTPVLEKFEDMGAIITSGDDWIRAQMKGRPKAVDIRTQPHPGFPTDMQAQVMAIACLADGTSTFIENIFENRYMHVPELNRLGASIQVDGHTAVVKGVECFTAAPVMATDLRASMSLVMAAAAAEGESLIDRIYHIDRGYEHVEKKLRALGVNIERINSND</sequence>
<name>MURA_PSYA2</name>
<dbReference type="EC" id="2.5.1.7" evidence="1"/>
<dbReference type="EMBL" id="CP000082">
    <property type="protein sequence ID" value="AAZ19752.1"/>
    <property type="molecule type" value="Genomic_DNA"/>
</dbReference>
<dbReference type="RefSeq" id="WP_011281161.1">
    <property type="nucleotide sequence ID" value="NC_007204.1"/>
</dbReference>
<dbReference type="SMR" id="Q4FQF6"/>
<dbReference type="STRING" id="259536.Psyc_1904"/>
<dbReference type="KEGG" id="par:Psyc_1904"/>
<dbReference type="eggNOG" id="COG0766">
    <property type="taxonomic scope" value="Bacteria"/>
</dbReference>
<dbReference type="HOGENOM" id="CLU_027387_0_0_6"/>
<dbReference type="OrthoDB" id="9803760at2"/>
<dbReference type="UniPathway" id="UPA00219"/>
<dbReference type="Proteomes" id="UP000000546">
    <property type="component" value="Chromosome"/>
</dbReference>
<dbReference type="GO" id="GO:0005737">
    <property type="term" value="C:cytoplasm"/>
    <property type="evidence" value="ECO:0007669"/>
    <property type="project" value="UniProtKB-SubCell"/>
</dbReference>
<dbReference type="GO" id="GO:0008760">
    <property type="term" value="F:UDP-N-acetylglucosamine 1-carboxyvinyltransferase activity"/>
    <property type="evidence" value="ECO:0007669"/>
    <property type="project" value="UniProtKB-UniRule"/>
</dbReference>
<dbReference type="GO" id="GO:0051301">
    <property type="term" value="P:cell division"/>
    <property type="evidence" value="ECO:0007669"/>
    <property type="project" value="UniProtKB-KW"/>
</dbReference>
<dbReference type="GO" id="GO:0071555">
    <property type="term" value="P:cell wall organization"/>
    <property type="evidence" value="ECO:0007669"/>
    <property type="project" value="UniProtKB-KW"/>
</dbReference>
<dbReference type="GO" id="GO:0009252">
    <property type="term" value="P:peptidoglycan biosynthetic process"/>
    <property type="evidence" value="ECO:0007669"/>
    <property type="project" value="UniProtKB-UniRule"/>
</dbReference>
<dbReference type="GO" id="GO:0008360">
    <property type="term" value="P:regulation of cell shape"/>
    <property type="evidence" value="ECO:0007669"/>
    <property type="project" value="UniProtKB-KW"/>
</dbReference>
<dbReference type="GO" id="GO:0019277">
    <property type="term" value="P:UDP-N-acetylgalactosamine biosynthetic process"/>
    <property type="evidence" value="ECO:0007669"/>
    <property type="project" value="InterPro"/>
</dbReference>
<dbReference type="CDD" id="cd01555">
    <property type="entry name" value="UdpNAET"/>
    <property type="match status" value="1"/>
</dbReference>
<dbReference type="FunFam" id="3.65.10.10:FF:000001">
    <property type="entry name" value="UDP-N-acetylglucosamine 1-carboxyvinyltransferase"/>
    <property type="match status" value="1"/>
</dbReference>
<dbReference type="Gene3D" id="3.65.10.10">
    <property type="entry name" value="Enolpyruvate transferase domain"/>
    <property type="match status" value="2"/>
</dbReference>
<dbReference type="HAMAP" id="MF_00111">
    <property type="entry name" value="MurA"/>
    <property type="match status" value="1"/>
</dbReference>
<dbReference type="InterPro" id="IPR001986">
    <property type="entry name" value="Enolpyruvate_Tfrase_dom"/>
</dbReference>
<dbReference type="InterPro" id="IPR036968">
    <property type="entry name" value="Enolpyruvate_Tfrase_sf"/>
</dbReference>
<dbReference type="InterPro" id="IPR050068">
    <property type="entry name" value="MurA_subfamily"/>
</dbReference>
<dbReference type="InterPro" id="IPR013792">
    <property type="entry name" value="RNA3'P_cycl/enolpyr_Trfase_a/b"/>
</dbReference>
<dbReference type="InterPro" id="IPR005750">
    <property type="entry name" value="UDP_GlcNAc_COvinyl_MurA"/>
</dbReference>
<dbReference type="NCBIfam" id="TIGR01072">
    <property type="entry name" value="murA"/>
    <property type="match status" value="1"/>
</dbReference>
<dbReference type="NCBIfam" id="NF006873">
    <property type="entry name" value="PRK09369.1"/>
    <property type="match status" value="1"/>
</dbReference>
<dbReference type="PANTHER" id="PTHR43783">
    <property type="entry name" value="UDP-N-ACETYLGLUCOSAMINE 1-CARBOXYVINYLTRANSFERASE"/>
    <property type="match status" value="1"/>
</dbReference>
<dbReference type="PANTHER" id="PTHR43783:SF1">
    <property type="entry name" value="UDP-N-ACETYLGLUCOSAMINE 1-CARBOXYVINYLTRANSFERASE"/>
    <property type="match status" value="1"/>
</dbReference>
<dbReference type="Pfam" id="PF00275">
    <property type="entry name" value="EPSP_synthase"/>
    <property type="match status" value="1"/>
</dbReference>
<dbReference type="SUPFAM" id="SSF55205">
    <property type="entry name" value="EPT/RTPC-like"/>
    <property type="match status" value="1"/>
</dbReference>
<reference key="1">
    <citation type="journal article" date="2010" name="Appl. Environ. Microbiol.">
        <title>The genome sequence of Psychrobacter arcticus 273-4, a psychroactive Siberian permafrost bacterium, reveals mechanisms for adaptation to low-temperature growth.</title>
        <authorList>
            <person name="Ayala-del-Rio H.L."/>
            <person name="Chain P.S."/>
            <person name="Grzymski J.J."/>
            <person name="Ponder M.A."/>
            <person name="Ivanova N."/>
            <person name="Bergholz P.W."/>
            <person name="Di Bartolo G."/>
            <person name="Hauser L."/>
            <person name="Land M."/>
            <person name="Bakermans C."/>
            <person name="Rodrigues D."/>
            <person name="Klappenbach J."/>
            <person name="Zarka D."/>
            <person name="Larimer F."/>
            <person name="Richardson P."/>
            <person name="Murray A."/>
            <person name="Thomashow M."/>
            <person name="Tiedje J.M."/>
        </authorList>
    </citation>
    <scope>NUCLEOTIDE SEQUENCE [LARGE SCALE GENOMIC DNA]</scope>
    <source>
        <strain>DSM 17307 / VKM B-2377 / 273-4</strain>
    </source>
</reference>
<proteinExistence type="inferred from homology"/>
<protein>
    <recommendedName>
        <fullName evidence="1">UDP-N-acetylglucosamine 1-carboxyvinyltransferase</fullName>
        <ecNumber evidence="1">2.5.1.7</ecNumber>
    </recommendedName>
    <alternativeName>
        <fullName evidence="1">Enoylpyruvate transferase</fullName>
    </alternativeName>
    <alternativeName>
        <fullName evidence="1">UDP-N-acetylglucosamine enolpyruvyl transferase</fullName>
        <shortName evidence="1">EPT</shortName>
    </alternativeName>
</protein>
<feature type="chain" id="PRO_0000231251" description="UDP-N-acetylglucosamine 1-carboxyvinyltransferase">
    <location>
        <begin position="1"/>
        <end position="422"/>
    </location>
</feature>
<feature type="active site" description="Proton donor" evidence="1">
    <location>
        <position position="116"/>
    </location>
</feature>
<feature type="binding site" evidence="1">
    <location>
        <begin position="22"/>
        <end position="23"/>
    </location>
    <ligand>
        <name>phosphoenolpyruvate</name>
        <dbReference type="ChEBI" id="CHEBI:58702"/>
    </ligand>
</feature>
<feature type="binding site" evidence="1">
    <location>
        <position position="92"/>
    </location>
    <ligand>
        <name>UDP-N-acetyl-alpha-D-glucosamine</name>
        <dbReference type="ChEBI" id="CHEBI:57705"/>
    </ligand>
</feature>
<feature type="binding site" evidence="1">
    <location>
        <begin position="121"/>
        <end position="125"/>
    </location>
    <ligand>
        <name>UDP-N-acetyl-alpha-D-glucosamine</name>
        <dbReference type="ChEBI" id="CHEBI:57705"/>
    </ligand>
</feature>
<feature type="binding site" evidence="1">
    <location>
        <position position="307"/>
    </location>
    <ligand>
        <name>UDP-N-acetyl-alpha-D-glucosamine</name>
        <dbReference type="ChEBI" id="CHEBI:57705"/>
    </ligand>
</feature>
<feature type="binding site" evidence="1">
    <location>
        <position position="329"/>
    </location>
    <ligand>
        <name>UDP-N-acetyl-alpha-D-glucosamine</name>
        <dbReference type="ChEBI" id="CHEBI:57705"/>
    </ligand>
</feature>
<feature type="modified residue" description="2-(S-cysteinyl)pyruvic acid O-phosphothioketal" evidence="1">
    <location>
        <position position="116"/>
    </location>
</feature>
<keyword id="KW-0131">Cell cycle</keyword>
<keyword id="KW-0132">Cell division</keyword>
<keyword id="KW-0133">Cell shape</keyword>
<keyword id="KW-0961">Cell wall biogenesis/degradation</keyword>
<keyword id="KW-0963">Cytoplasm</keyword>
<keyword id="KW-0573">Peptidoglycan synthesis</keyword>
<keyword id="KW-0670">Pyruvate</keyword>
<keyword id="KW-1185">Reference proteome</keyword>
<keyword id="KW-0808">Transferase</keyword>